<proteinExistence type="evidence at protein level"/>
<organism>
    <name type="scientific">Arabidopsis thaliana</name>
    <name type="common">Mouse-ear cress</name>
    <dbReference type="NCBI Taxonomy" id="3702"/>
    <lineage>
        <taxon>Eukaryota</taxon>
        <taxon>Viridiplantae</taxon>
        <taxon>Streptophyta</taxon>
        <taxon>Embryophyta</taxon>
        <taxon>Tracheophyta</taxon>
        <taxon>Spermatophyta</taxon>
        <taxon>Magnoliopsida</taxon>
        <taxon>eudicotyledons</taxon>
        <taxon>Gunneridae</taxon>
        <taxon>Pentapetalae</taxon>
        <taxon>rosids</taxon>
        <taxon>malvids</taxon>
        <taxon>Brassicales</taxon>
        <taxon>Brassicaceae</taxon>
        <taxon>Camelineae</taxon>
        <taxon>Arabidopsis</taxon>
    </lineage>
</organism>
<keyword id="KW-0963">Cytoplasm</keyword>
<keyword id="KW-0216">Detoxification</keyword>
<keyword id="KW-0903">Direct protein sequencing</keyword>
<keyword id="KW-1185">Reference proteome</keyword>
<keyword id="KW-0346">Stress response</keyword>
<keyword id="KW-0808">Transferase</keyword>
<sequence>MVLTIYAPLFASSKRAVVTLVEKGVSFETVNVDLMKGEQRQPEYLAIQPFGKIPVLVDGDYKIFESRAIMRYIAEKYRSQGPDLLGKTIEERGQVEQWLDVEATSYHPPLLALTLNIVFAPLMGFPADEKVIKESEEKLAEVLDVYEAQLSKNEYLAGDFVSLADLAHLPFTEYLVGPIGKAHLIKDRKHVSAWWDKISSRAAWKEVSAKYSLPV</sequence>
<feature type="initiator methionine" description="Removed" evidence="6">
    <location>
        <position position="1"/>
    </location>
</feature>
<feature type="chain" id="PRO_0000185847" description="Glutathione S-transferase F10">
    <location>
        <begin position="2"/>
        <end position="215"/>
    </location>
</feature>
<feature type="domain" description="GST N-terminal" evidence="2">
    <location>
        <begin position="2"/>
        <end position="81"/>
    </location>
</feature>
<feature type="domain" description="GST C-terminal" evidence="2">
    <location>
        <begin position="88"/>
        <end position="215"/>
    </location>
</feature>
<feature type="binding site" evidence="1">
    <location>
        <begin position="11"/>
        <end position="12"/>
    </location>
    <ligand>
        <name>glutathione</name>
        <dbReference type="ChEBI" id="CHEBI:57925"/>
    </ligand>
</feature>
<feature type="binding site" evidence="1">
    <location>
        <begin position="39"/>
        <end position="40"/>
    </location>
    <ligand>
        <name>glutathione</name>
        <dbReference type="ChEBI" id="CHEBI:57925"/>
    </ligand>
</feature>
<feature type="binding site" evidence="1">
    <location>
        <begin position="52"/>
        <end position="53"/>
    </location>
    <ligand>
        <name>glutathione</name>
        <dbReference type="ChEBI" id="CHEBI:57925"/>
    </ligand>
</feature>
<feature type="binding site" evidence="1">
    <location>
        <begin position="65"/>
        <end position="66"/>
    </location>
    <ligand>
        <name>glutathione</name>
        <dbReference type="ChEBI" id="CHEBI:57925"/>
    </ligand>
</feature>
<dbReference type="EC" id="2.5.1.18" evidence="3"/>
<dbReference type="EMBL" id="D17673">
    <property type="protein sequence ID" value="BAA04554.1"/>
    <property type="molecule type" value="mRNA"/>
</dbReference>
<dbReference type="EMBL" id="AC004669">
    <property type="protein sequence ID" value="AAC20721.1"/>
    <property type="molecule type" value="Genomic_DNA"/>
</dbReference>
<dbReference type="EMBL" id="CP002685">
    <property type="protein sequence ID" value="AEC08450.1"/>
    <property type="molecule type" value="Genomic_DNA"/>
</dbReference>
<dbReference type="EMBL" id="AY128398">
    <property type="protein sequence ID" value="AAM91601.1"/>
    <property type="molecule type" value="mRNA"/>
</dbReference>
<dbReference type="EMBL" id="BT000077">
    <property type="protein sequence ID" value="AAN15396.1"/>
    <property type="molecule type" value="mRNA"/>
</dbReference>
<dbReference type="PIR" id="S39542">
    <property type="entry name" value="S39542"/>
</dbReference>
<dbReference type="RefSeq" id="NP_180644.1">
    <property type="nucleotide sequence ID" value="NM_128639.4"/>
</dbReference>
<dbReference type="SMR" id="P42761"/>
<dbReference type="BioGRID" id="2986">
    <property type="interactions" value="1"/>
</dbReference>
<dbReference type="FunCoup" id="P42761">
    <property type="interactions" value="890"/>
</dbReference>
<dbReference type="IntAct" id="P42761">
    <property type="interactions" value="1"/>
</dbReference>
<dbReference type="STRING" id="3702.P42761"/>
<dbReference type="iPTMnet" id="P42761"/>
<dbReference type="PaxDb" id="3702-AT2G30870.1"/>
<dbReference type="ProteomicsDB" id="247136"/>
<dbReference type="EnsemblPlants" id="AT2G30870.1">
    <property type="protein sequence ID" value="AT2G30870.1"/>
    <property type="gene ID" value="AT2G30870"/>
</dbReference>
<dbReference type="GeneID" id="817637"/>
<dbReference type="Gramene" id="AT2G30870.1">
    <property type="protein sequence ID" value="AT2G30870.1"/>
    <property type="gene ID" value="AT2G30870"/>
</dbReference>
<dbReference type="KEGG" id="ath:AT2G30870"/>
<dbReference type="Araport" id="AT2G30870"/>
<dbReference type="TAIR" id="AT2G30870">
    <property type="gene designation" value="GSTF10"/>
</dbReference>
<dbReference type="eggNOG" id="KOG0867">
    <property type="taxonomic scope" value="Eukaryota"/>
</dbReference>
<dbReference type="HOGENOM" id="CLU_011226_5_1_1"/>
<dbReference type="InParanoid" id="P42761"/>
<dbReference type="OMA" id="GHTLYPN"/>
<dbReference type="OrthoDB" id="422574at2759"/>
<dbReference type="PhylomeDB" id="P42761"/>
<dbReference type="BioCyc" id="ARA:AT2G30870-MONOMER"/>
<dbReference type="CD-CODE" id="4299E36E">
    <property type="entry name" value="Nucleolus"/>
</dbReference>
<dbReference type="PRO" id="PR:P42761"/>
<dbReference type="Proteomes" id="UP000006548">
    <property type="component" value="Chromosome 2"/>
</dbReference>
<dbReference type="ExpressionAtlas" id="P42761">
    <property type="expression patterns" value="baseline and differential"/>
</dbReference>
<dbReference type="GO" id="GO:0048046">
    <property type="term" value="C:apoplast"/>
    <property type="evidence" value="ECO:0007005"/>
    <property type="project" value="TAIR"/>
</dbReference>
<dbReference type="GO" id="GO:0009507">
    <property type="term" value="C:chloroplast"/>
    <property type="evidence" value="ECO:0007005"/>
    <property type="project" value="TAIR"/>
</dbReference>
<dbReference type="GO" id="GO:0005737">
    <property type="term" value="C:cytoplasm"/>
    <property type="evidence" value="ECO:0000303"/>
    <property type="project" value="TAIR"/>
</dbReference>
<dbReference type="GO" id="GO:0005829">
    <property type="term" value="C:cytosol"/>
    <property type="evidence" value="ECO:0007005"/>
    <property type="project" value="TAIR"/>
</dbReference>
<dbReference type="GO" id="GO:0005777">
    <property type="term" value="C:peroxisome"/>
    <property type="evidence" value="ECO:0007005"/>
    <property type="project" value="TAIR"/>
</dbReference>
<dbReference type="GO" id="GO:0009505">
    <property type="term" value="C:plant-type cell wall"/>
    <property type="evidence" value="ECO:0007005"/>
    <property type="project" value="TAIR"/>
</dbReference>
<dbReference type="GO" id="GO:0000325">
    <property type="term" value="C:plant-type vacuole"/>
    <property type="evidence" value="ECO:0007005"/>
    <property type="project" value="TAIR"/>
</dbReference>
<dbReference type="GO" id="GO:0005886">
    <property type="term" value="C:plasma membrane"/>
    <property type="evidence" value="ECO:0007005"/>
    <property type="project" value="TAIR"/>
</dbReference>
<dbReference type="GO" id="GO:0005507">
    <property type="term" value="F:copper ion binding"/>
    <property type="evidence" value="ECO:0007005"/>
    <property type="project" value="TAIR"/>
</dbReference>
<dbReference type="GO" id="GO:0043295">
    <property type="term" value="F:glutathione binding"/>
    <property type="evidence" value="ECO:0000314"/>
    <property type="project" value="TAIR"/>
</dbReference>
<dbReference type="GO" id="GO:0004364">
    <property type="term" value="F:glutathione transferase activity"/>
    <property type="evidence" value="ECO:0007669"/>
    <property type="project" value="UniProtKB-EC"/>
</dbReference>
<dbReference type="GO" id="GO:0009414">
    <property type="term" value="P:response to water deprivation"/>
    <property type="evidence" value="ECO:0000270"/>
    <property type="project" value="TAIR"/>
</dbReference>
<dbReference type="GO" id="GO:0009407">
    <property type="term" value="P:toxin catabolic process"/>
    <property type="evidence" value="ECO:0000304"/>
    <property type="project" value="TAIR"/>
</dbReference>
<dbReference type="CDD" id="cd03187">
    <property type="entry name" value="GST_C_Phi"/>
    <property type="match status" value="1"/>
</dbReference>
<dbReference type="CDD" id="cd03053">
    <property type="entry name" value="GST_N_Phi"/>
    <property type="match status" value="1"/>
</dbReference>
<dbReference type="FunFam" id="1.20.1050.10:FF:000004">
    <property type="entry name" value="Glutathione S-transferase F2"/>
    <property type="match status" value="1"/>
</dbReference>
<dbReference type="FunFam" id="3.40.30.10:FF:000016">
    <property type="entry name" value="Glutathione S-transferase F2"/>
    <property type="match status" value="1"/>
</dbReference>
<dbReference type="Gene3D" id="1.20.1050.10">
    <property type="match status" value="1"/>
</dbReference>
<dbReference type="Gene3D" id="3.40.30.10">
    <property type="entry name" value="Glutaredoxin"/>
    <property type="match status" value="1"/>
</dbReference>
<dbReference type="InterPro" id="IPR010987">
    <property type="entry name" value="Glutathione-S-Trfase_C-like"/>
</dbReference>
<dbReference type="InterPro" id="IPR036282">
    <property type="entry name" value="Glutathione-S-Trfase_C_sf"/>
</dbReference>
<dbReference type="InterPro" id="IPR040079">
    <property type="entry name" value="Glutathione_S-Trfase"/>
</dbReference>
<dbReference type="InterPro" id="IPR004045">
    <property type="entry name" value="Glutathione_S-Trfase_N"/>
</dbReference>
<dbReference type="InterPro" id="IPR004046">
    <property type="entry name" value="GST_C"/>
</dbReference>
<dbReference type="InterPro" id="IPR034347">
    <property type="entry name" value="GST_Phi_C"/>
</dbReference>
<dbReference type="InterPro" id="IPR036249">
    <property type="entry name" value="Thioredoxin-like_sf"/>
</dbReference>
<dbReference type="PANTHER" id="PTHR43900:SF50">
    <property type="entry name" value="GLUTATHIONE S-TRANSFERASE F10"/>
    <property type="match status" value="1"/>
</dbReference>
<dbReference type="PANTHER" id="PTHR43900">
    <property type="entry name" value="GLUTATHIONE S-TRANSFERASE RHO"/>
    <property type="match status" value="1"/>
</dbReference>
<dbReference type="Pfam" id="PF00043">
    <property type="entry name" value="GST_C"/>
    <property type="match status" value="1"/>
</dbReference>
<dbReference type="Pfam" id="PF02798">
    <property type="entry name" value="GST_N"/>
    <property type="match status" value="1"/>
</dbReference>
<dbReference type="SFLD" id="SFLDS00019">
    <property type="entry name" value="Glutathione_Transferase_(cytos"/>
    <property type="match status" value="1"/>
</dbReference>
<dbReference type="SFLD" id="SFLDG00358">
    <property type="entry name" value="Main_(cytGST)"/>
    <property type="match status" value="1"/>
</dbReference>
<dbReference type="SUPFAM" id="SSF47616">
    <property type="entry name" value="GST C-terminal domain-like"/>
    <property type="match status" value="1"/>
</dbReference>
<dbReference type="SUPFAM" id="SSF52833">
    <property type="entry name" value="Thioredoxin-like"/>
    <property type="match status" value="1"/>
</dbReference>
<dbReference type="PROSITE" id="PS50405">
    <property type="entry name" value="GST_CTER"/>
    <property type="match status" value="1"/>
</dbReference>
<dbReference type="PROSITE" id="PS50404">
    <property type="entry name" value="GST_NTER"/>
    <property type="match status" value="1"/>
</dbReference>
<name>GSTFA_ARATH</name>
<protein>
    <recommendedName>
        <fullName evidence="7">Glutathione S-transferase F10</fullName>
        <shortName evidence="7">AtGSTF10</shortName>
        <ecNumber evidence="3">2.5.1.18</ecNumber>
    </recommendedName>
    <alternativeName>
        <fullName evidence="7">AtGSTF4</fullName>
    </alternativeName>
    <alternativeName>
        <fullName evidence="7">GST class-phi member 10</fullName>
    </alternativeName>
    <alternativeName>
        <fullName evidence="8">Protein EARLY RESPONSE TO DEHYDRATION 13</fullName>
    </alternativeName>
</protein>
<reference key="1">
    <citation type="journal article" date="1993" name="FEBS Lett.">
        <title>Characterization of two cDNAs (ERD11 and ERD13) for dehydration-inducible genes that encode putative glutathione S-transferases in Arabidopsis thaliana L.</title>
        <authorList>
            <person name="Kiyosue T."/>
            <person name="Yamaguchi-Shinozaki K."/>
            <person name="Shinozaki K."/>
        </authorList>
    </citation>
    <scope>NUCLEOTIDE SEQUENCE [MRNA]</scope>
    <source>
        <strain>cv. Columbia</strain>
    </source>
</reference>
<reference key="2">
    <citation type="journal article" date="1999" name="Nature">
        <title>Sequence and analysis of chromosome 2 of the plant Arabidopsis thaliana.</title>
        <authorList>
            <person name="Lin X."/>
            <person name="Kaul S."/>
            <person name="Rounsley S.D."/>
            <person name="Shea T.P."/>
            <person name="Benito M.-I."/>
            <person name="Town C.D."/>
            <person name="Fujii C.Y."/>
            <person name="Mason T.M."/>
            <person name="Bowman C.L."/>
            <person name="Barnstead M.E."/>
            <person name="Feldblyum T.V."/>
            <person name="Buell C.R."/>
            <person name="Ketchum K.A."/>
            <person name="Lee J.J."/>
            <person name="Ronning C.M."/>
            <person name="Koo H.L."/>
            <person name="Moffat K.S."/>
            <person name="Cronin L.A."/>
            <person name="Shen M."/>
            <person name="Pai G."/>
            <person name="Van Aken S."/>
            <person name="Umayam L."/>
            <person name="Tallon L.J."/>
            <person name="Gill J.E."/>
            <person name="Adams M.D."/>
            <person name="Carrera A.J."/>
            <person name="Creasy T.H."/>
            <person name="Goodman H.M."/>
            <person name="Somerville C.R."/>
            <person name="Copenhaver G.P."/>
            <person name="Preuss D."/>
            <person name="Nierman W.C."/>
            <person name="White O."/>
            <person name="Eisen J.A."/>
            <person name="Salzberg S.L."/>
            <person name="Fraser C.M."/>
            <person name="Venter J.C."/>
        </authorList>
    </citation>
    <scope>NUCLEOTIDE SEQUENCE [LARGE SCALE GENOMIC DNA]</scope>
    <source>
        <strain>cv. Columbia</strain>
    </source>
</reference>
<reference key="3">
    <citation type="journal article" date="2017" name="Plant J.">
        <title>Araport11: a complete reannotation of the Arabidopsis thaliana reference genome.</title>
        <authorList>
            <person name="Cheng C.Y."/>
            <person name="Krishnakumar V."/>
            <person name="Chan A.P."/>
            <person name="Thibaud-Nissen F."/>
            <person name="Schobel S."/>
            <person name="Town C.D."/>
        </authorList>
    </citation>
    <scope>GENOME REANNOTATION</scope>
    <source>
        <strain>cv. Columbia</strain>
    </source>
</reference>
<reference key="4">
    <citation type="journal article" date="2003" name="Science">
        <title>Empirical analysis of transcriptional activity in the Arabidopsis genome.</title>
        <authorList>
            <person name="Yamada K."/>
            <person name="Lim J."/>
            <person name="Dale J.M."/>
            <person name="Chen H."/>
            <person name="Shinn P."/>
            <person name="Palm C.J."/>
            <person name="Southwick A.M."/>
            <person name="Wu H.C."/>
            <person name="Kim C.J."/>
            <person name="Nguyen M."/>
            <person name="Pham P.K."/>
            <person name="Cheuk R.F."/>
            <person name="Karlin-Newmann G."/>
            <person name="Liu S.X."/>
            <person name="Lam B."/>
            <person name="Sakano H."/>
            <person name="Wu T."/>
            <person name="Yu G."/>
            <person name="Miranda M."/>
            <person name="Quach H.L."/>
            <person name="Tripp M."/>
            <person name="Chang C.H."/>
            <person name="Lee J.M."/>
            <person name="Toriumi M.J."/>
            <person name="Chan M.M."/>
            <person name="Tang C.C."/>
            <person name="Onodera C.S."/>
            <person name="Deng J.M."/>
            <person name="Akiyama K."/>
            <person name="Ansari Y."/>
            <person name="Arakawa T."/>
            <person name="Banh J."/>
            <person name="Banno F."/>
            <person name="Bowser L."/>
            <person name="Brooks S.Y."/>
            <person name="Carninci P."/>
            <person name="Chao Q."/>
            <person name="Choy N."/>
            <person name="Enju A."/>
            <person name="Goldsmith A.D."/>
            <person name="Gurjal M."/>
            <person name="Hansen N.F."/>
            <person name="Hayashizaki Y."/>
            <person name="Johnson-Hopson C."/>
            <person name="Hsuan V.W."/>
            <person name="Iida K."/>
            <person name="Karnes M."/>
            <person name="Khan S."/>
            <person name="Koesema E."/>
            <person name="Ishida J."/>
            <person name="Jiang P.X."/>
            <person name="Jones T."/>
            <person name="Kawai J."/>
            <person name="Kamiya A."/>
            <person name="Meyers C."/>
            <person name="Nakajima M."/>
            <person name="Narusaka M."/>
            <person name="Seki M."/>
            <person name="Sakurai T."/>
            <person name="Satou M."/>
            <person name="Tamse R."/>
            <person name="Vaysberg M."/>
            <person name="Wallender E.K."/>
            <person name="Wong C."/>
            <person name="Yamamura Y."/>
            <person name="Yuan S."/>
            <person name="Shinozaki K."/>
            <person name="Davis R.W."/>
            <person name="Theologis A."/>
            <person name="Ecker J.R."/>
        </authorList>
    </citation>
    <scope>NUCLEOTIDE SEQUENCE [LARGE SCALE MRNA]</scope>
    <source>
        <strain>cv. Columbia</strain>
    </source>
</reference>
<reference key="5">
    <citation type="journal article" date="1997" name="J. Biol. Chem.">
        <title>Differential extraction and protein sequencing reveals major differences in patterns of primary cell wall proteins from plants.</title>
        <authorList>
            <person name="Robertson D."/>
            <person name="Mitchell G.P."/>
            <person name="Gilroy J.S."/>
            <person name="Gerrish C."/>
            <person name="Bolwell G.P."/>
            <person name="Slabas A.R."/>
        </authorList>
    </citation>
    <scope>PROTEIN SEQUENCE OF 2-7</scope>
    <source>
        <strain>cv. Landsberg erecta</strain>
    </source>
</reference>
<reference key="6">
    <citation type="journal article" date="2002" name="Physiol. Plantarum">
        <title>Drought regulation of GST8, encoding the Arabidopsis homologue of ParC/Nt107 glutathione transferase/peroxidase.</title>
        <authorList>
            <person name="Bianchi M.W."/>
            <person name="Roux C."/>
            <person name="Vartanian N."/>
        </authorList>
    </citation>
    <scope>INDUCTION</scope>
</reference>
<reference key="7">
    <citation type="journal article" date="2002" name="Plant Mol. Biol.">
        <title>Probing the diversity of the Arabidopsis glutathione S-transferase gene family.</title>
        <authorList>
            <person name="Wagner U."/>
            <person name="Edwards R."/>
            <person name="Dixon D.P."/>
            <person name="Mauch F."/>
        </authorList>
    </citation>
    <scope>FUNCTION</scope>
    <scope>CATALYTIC ACTIVITY</scope>
    <scope>GENE FAMILY</scope>
    <scope>NOMENCLATURE</scope>
    <source>
        <strain>cv. Columbia</strain>
    </source>
</reference>
<reference key="8">
    <citation type="journal article" date="2009" name="Biochem. Biophys. Res. Commun.">
        <title>Modulations of AtGSTF10 expression induce stress tolerance and BAK1-mediated cell death.</title>
        <authorList>
            <person name="Ryu H.Y."/>
            <person name="Kim S.Y."/>
            <person name="Park H.M."/>
            <person name="You J.Y."/>
            <person name="Kim B.H."/>
            <person name="Lee J.S."/>
            <person name="Nam K.H."/>
        </authorList>
    </citation>
    <scope>TISSUE SPECIFICITY</scope>
    <scope>INDUCTION BY GROWTH REGULATORS</scope>
    <scope>DISRUPTION PHENOTYPE</scope>
    <scope>INTERACTION WITH BAK1</scope>
</reference>
<evidence type="ECO:0000250" key="1">
    <source>
        <dbReference type="UniProtKB" id="O80852"/>
    </source>
</evidence>
<evidence type="ECO:0000255" key="2"/>
<evidence type="ECO:0000269" key="3">
    <source>
    </source>
</evidence>
<evidence type="ECO:0000269" key="4">
    <source>
    </source>
</evidence>
<evidence type="ECO:0000269" key="5">
    <source>
    </source>
</evidence>
<evidence type="ECO:0000269" key="6">
    <source>
    </source>
</evidence>
<evidence type="ECO:0000303" key="7">
    <source>
    </source>
</evidence>
<evidence type="ECO:0000303" key="8">
    <source>
    </source>
</evidence>
<evidence type="ECO:0000305" key="9"/>
<evidence type="ECO:0000312" key="10">
    <source>
        <dbReference type="Araport" id="AT2G30870"/>
    </source>
</evidence>
<evidence type="ECO:0000312" key="11">
    <source>
        <dbReference type="EMBL" id="AAC20721.1"/>
    </source>
</evidence>
<comment type="function">
    <text evidence="3">In vitro, possesses glutathione S-transferase activity toward 1-chloro-2,4-dinitrobenzene (CDNB) and benzyl isothiocyanate (BITC). May be involved in the conjugation of reduced glutathione to a wide number of exogenous and endogenous hydrophobic electrophiles and have a detoxification role against certain herbicides.</text>
</comment>
<comment type="catalytic activity">
    <reaction evidence="3">
        <text>RX + glutathione = an S-substituted glutathione + a halide anion + H(+)</text>
        <dbReference type="Rhea" id="RHEA:16437"/>
        <dbReference type="ChEBI" id="CHEBI:15378"/>
        <dbReference type="ChEBI" id="CHEBI:16042"/>
        <dbReference type="ChEBI" id="CHEBI:17792"/>
        <dbReference type="ChEBI" id="CHEBI:57925"/>
        <dbReference type="ChEBI" id="CHEBI:90779"/>
        <dbReference type="EC" id="2.5.1.18"/>
    </reaction>
</comment>
<comment type="subunit">
    <text evidence="5">Interacts with BAK1.</text>
</comment>
<comment type="subcellular location">
    <subcellularLocation>
        <location evidence="9">Cytoplasm</location>
        <location evidence="9">Cytosol</location>
    </subcellularLocation>
</comment>
<comment type="tissue specificity">
    <text evidence="5">Expressed in roots, stems, floral buds, mature flowers and leaves.</text>
</comment>
<comment type="induction">
    <text evidence="4 5">By dehydration stress, wounding, H(2)O(2) and jasmonate, but not by growth regulators.</text>
</comment>
<comment type="disruption phenotype">
    <text evidence="5">No visible phenotype, maybe due to the possible redundancy with GSTF9.</text>
</comment>
<comment type="similarity">
    <text evidence="9">Belongs to the GST superfamily. Phi family.</text>
</comment>
<gene>
    <name evidence="7" type="primary">GSTF10</name>
    <name evidence="8" type="synonym">ERD13</name>
    <name evidence="7" type="synonym">GSTF4</name>
    <name evidence="10" type="ordered locus">At2g30870</name>
    <name evidence="11" type="ORF">F7F1.8</name>
</gene>
<accession>P42761</accession>